<feature type="chain" id="PRO_1000002506" description="Holliday junction branch migration complex subunit RuvA">
    <location>
        <begin position="1"/>
        <end position="196"/>
    </location>
</feature>
<feature type="region of interest" description="Domain I" evidence="1">
    <location>
        <begin position="1"/>
        <end position="63"/>
    </location>
</feature>
<feature type="region of interest" description="Domain II" evidence="1">
    <location>
        <begin position="64"/>
        <end position="142"/>
    </location>
</feature>
<feature type="region of interest" description="Flexible linker" evidence="1">
    <location>
        <begin position="142"/>
        <end position="146"/>
    </location>
</feature>
<feature type="region of interest" description="Domain III" evidence="1">
    <location>
        <begin position="147"/>
        <end position="196"/>
    </location>
</feature>
<keyword id="KW-0963">Cytoplasm</keyword>
<keyword id="KW-0227">DNA damage</keyword>
<keyword id="KW-0233">DNA recombination</keyword>
<keyword id="KW-0234">DNA repair</keyword>
<keyword id="KW-0238">DNA-binding</keyword>
<keyword id="KW-1185">Reference proteome</keyword>
<proteinExistence type="inferred from homology"/>
<reference key="1">
    <citation type="journal article" date="2007" name="PLoS Biol.">
        <title>Evolution of symbiotic bacteria in the distal human intestine.</title>
        <authorList>
            <person name="Xu J."/>
            <person name="Mahowald M.A."/>
            <person name="Ley R.E."/>
            <person name="Lozupone C.A."/>
            <person name="Hamady M."/>
            <person name="Martens E.C."/>
            <person name="Henrissat B."/>
            <person name="Coutinho P.M."/>
            <person name="Minx P."/>
            <person name="Latreille P."/>
            <person name="Cordum H."/>
            <person name="Van Brunt A."/>
            <person name="Kim K."/>
            <person name="Fulton R.S."/>
            <person name="Fulton L.A."/>
            <person name="Clifton S.W."/>
            <person name="Wilson R.K."/>
            <person name="Knight R.D."/>
            <person name="Gordon J.I."/>
        </authorList>
    </citation>
    <scope>NUCLEOTIDE SEQUENCE [LARGE SCALE GENOMIC DNA]</scope>
    <source>
        <strain>ATCC 8503 / DSM 20701 / CIP 104284 / JCM 5825 / NCTC 11152</strain>
    </source>
</reference>
<gene>
    <name evidence="1" type="primary">ruvA</name>
    <name type="ordered locus">BDI_2660</name>
</gene>
<organism>
    <name type="scientific">Parabacteroides distasonis (strain ATCC 8503 / DSM 20701 / CIP 104284 / JCM 5825 / NCTC 11152)</name>
    <dbReference type="NCBI Taxonomy" id="435591"/>
    <lineage>
        <taxon>Bacteria</taxon>
        <taxon>Pseudomonadati</taxon>
        <taxon>Bacteroidota</taxon>
        <taxon>Bacteroidia</taxon>
        <taxon>Bacteroidales</taxon>
        <taxon>Tannerellaceae</taxon>
        <taxon>Parabacteroides</taxon>
    </lineage>
</organism>
<sequence>MIEYIKGEIVELTPTRMILECGGIGYELNISLNTYSAFGNKTTGKIYIYEVIREDAHLLFGFAEKIERELFLLLTSVSGVGPNTARMILSSLPPSELVQVIGSKNEAALTAVKGIGLKTAQRILVDLKNKVKPMESMAGNLPEASVSNGAVTEEAVAALVMLGFQKAASQKAVSAILKGSPTLAVEQVIKTALRML</sequence>
<protein>
    <recommendedName>
        <fullName evidence="1">Holliday junction branch migration complex subunit RuvA</fullName>
    </recommendedName>
</protein>
<accession>A6LFB5</accession>
<comment type="function">
    <text evidence="1">The RuvA-RuvB-RuvC complex processes Holliday junction (HJ) DNA during genetic recombination and DNA repair, while the RuvA-RuvB complex plays an important role in the rescue of blocked DNA replication forks via replication fork reversal (RFR). RuvA specifically binds to HJ cruciform DNA, conferring on it an open structure. The RuvB hexamer acts as an ATP-dependent pump, pulling dsDNA into and through the RuvAB complex. HJ branch migration allows RuvC to scan DNA until it finds its consensus sequence, where it cleaves and resolves the cruciform DNA.</text>
</comment>
<comment type="subunit">
    <text evidence="1">Homotetramer. Forms an RuvA(8)-RuvB(12)-Holliday junction (HJ) complex. HJ DNA is sandwiched between 2 RuvA tetramers; dsDNA enters through RuvA and exits via RuvB. An RuvB hexamer assembles on each DNA strand where it exits the tetramer. Each RuvB hexamer is contacted by two RuvA subunits (via domain III) on 2 adjacent RuvB subunits; this complex drives branch migration. In the full resolvosome a probable DNA-RuvA(4)-RuvB(12)-RuvC(2) complex forms which resolves the HJ.</text>
</comment>
<comment type="subcellular location">
    <subcellularLocation>
        <location evidence="1">Cytoplasm</location>
    </subcellularLocation>
</comment>
<comment type="domain">
    <text evidence="1">Has three domains with a flexible linker between the domains II and III and assumes an 'L' shape. Domain III is highly mobile and contacts RuvB.</text>
</comment>
<comment type="similarity">
    <text evidence="1">Belongs to the RuvA family.</text>
</comment>
<name>RUVA_PARD8</name>
<evidence type="ECO:0000255" key="1">
    <source>
        <dbReference type="HAMAP-Rule" id="MF_00031"/>
    </source>
</evidence>
<dbReference type="EMBL" id="CP000140">
    <property type="protein sequence ID" value="ABR44379.1"/>
    <property type="molecule type" value="Genomic_DNA"/>
</dbReference>
<dbReference type="RefSeq" id="WP_005866654.1">
    <property type="nucleotide sequence ID" value="NC_009615.1"/>
</dbReference>
<dbReference type="SMR" id="A6LFB5"/>
<dbReference type="STRING" id="435591.BDI_2660"/>
<dbReference type="PaxDb" id="435591-BDI_2660"/>
<dbReference type="KEGG" id="pdi:BDI_2660"/>
<dbReference type="eggNOG" id="COG0632">
    <property type="taxonomic scope" value="Bacteria"/>
</dbReference>
<dbReference type="HOGENOM" id="CLU_087936_3_0_10"/>
<dbReference type="BioCyc" id="PDIS435591:G1G5A-2734-MONOMER"/>
<dbReference type="Proteomes" id="UP000000566">
    <property type="component" value="Chromosome"/>
</dbReference>
<dbReference type="GO" id="GO:0005737">
    <property type="term" value="C:cytoplasm"/>
    <property type="evidence" value="ECO:0007669"/>
    <property type="project" value="UniProtKB-SubCell"/>
</dbReference>
<dbReference type="GO" id="GO:0009379">
    <property type="term" value="C:Holliday junction helicase complex"/>
    <property type="evidence" value="ECO:0007669"/>
    <property type="project" value="InterPro"/>
</dbReference>
<dbReference type="GO" id="GO:0048476">
    <property type="term" value="C:Holliday junction resolvase complex"/>
    <property type="evidence" value="ECO:0007669"/>
    <property type="project" value="UniProtKB-UniRule"/>
</dbReference>
<dbReference type="GO" id="GO:0005524">
    <property type="term" value="F:ATP binding"/>
    <property type="evidence" value="ECO:0007669"/>
    <property type="project" value="InterPro"/>
</dbReference>
<dbReference type="GO" id="GO:0000400">
    <property type="term" value="F:four-way junction DNA binding"/>
    <property type="evidence" value="ECO:0007669"/>
    <property type="project" value="UniProtKB-UniRule"/>
</dbReference>
<dbReference type="GO" id="GO:0009378">
    <property type="term" value="F:four-way junction helicase activity"/>
    <property type="evidence" value="ECO:0007669"/>
    <property type="project" value="InterPro"/>
</dbReference>
<dbReference type="GO" id="GO:0006310">
    <property type="term" value="P:DNA recombination"/>
    <property type="evidence" value="ECO:0007669"/>
    <property type="project" value="UniProtKB-UniRule"/>
</dbReference>
<dbReference type="GO" id="GO:0006281">
    <property type="term" value="P:DNA repair"/>
    <property type="evidence" value="ECO:0007669"/>
    <property type="project" value="UniProtKB-UniRule"/>
</dbReference>
<dbReference type="CDD" id="cd14332">
    <property type="entry name" value="UBA_RuvA_C"/>
    <property type="match status" value="1"/>
</dbReference>
<dbReference type="Gene3D" id="1.10.150.20">
    <property type="entry name" value="5' to 3' exonuclease, C-terminal subdomain"/>
    <property type="match status" value="1"/>
</dbReference>
<dbReference type="Gene3D" id="1.10.8.10">
    <property type="entry name" value="DNA helicase RuvA subunit, C-terminal domain"/>
    <property type="match status" value="1"/>
</dbReference>
<dbReference type="Gene3D" id="2.40.50.140">
    <property type="entry name" value="Nucleic acid-binding proteins"/>
    <property type="match status" value="1"/>
</dbReference>
<dbReference type="HAMAP" id="MF_00031">
    <property type="entry name" value="DNA_HJ_migration_RuvA"/>
    <property type="match status" value="1"/>
</dbReference>
<dbReference type="InterPro" id="IPR013849">
    <property type="entry name" value="DNA_helicase_Holl-junc_RuvA_I"/>
</dbReference>
<dbReference type="InterPro" id="IPR003583">
    <property type="entry name" value="Hlx-hairpin-Hlx_DNA-bd_motif"/>
</dbReference>
<dbReference type="InterPro" id="IPR012340">
    <property type="entry name" value="NA-bd_OB-fold"/>
</dbReference>
<dbReference type="InterPro" id="IPR000085">
    <property type="entry name" value="RuvA"/>
</dbReference>
<dbReference type="InterPro" id="IPR010994">
    <property type="entry name" value="RuvA_2-like"/>
</dbReference>
<dbReference type="InterPro" id="IPR011114">
    <property type="entry name" value="RuvA_C"/>
</dbReference>
<dbReference type="InterPro" id="IPR036267">
    <property type="entry name" value="RuvA_C_sf"/>
</dbReference>
<dbReference type="NCBIfam" id="TIGR00084">
    <property type="entry name" value="ruvA"/>
    <property type="match status" value="1"/>
</dbReference>
<dbReference type="Pfam" id="PF14520">
    <property type="entry name" value="HHH_5"/>
    <property type="match status" value="1"/>
</dbReference>
<dbReference type="Pfam" id="PF07499">
    <property type="entry name" value="RuvA_C"/>
    <property type="match status" value="1"/>
</dbReference>
<dbReference type="Pfam" id="PF01330">
    <property type="entry name" value="RuvA_N"/>
    <property type="match status" value="1"/>
</dbReference>
<dbReference type="SMART" id="SM00278">
    <property type="entry name" value="HhH1"/>
    <property type="match status" value="2"/>
</dbReference>
<dbReference type="SUPFAM" id="SSF46929">
    <property type="entry name" value="DNA helicase RuvA subunit, C-terminal domain"/>
    <property type="match status" value="1"/>
</dbReference>
<dbReference type="SUPFAM" id="SSF50249">
    <property type="entry name" value="Nucleic acid-binding proteins"/>
    <property type="match status" value="1"/>
</dbReference>
<dbReference type="SUPFAM" id="SSF47781">
    <property type="entry name" value="RuvA domain 2-like"/>
    <property type="match status" value="1"/>
</dbReference>